<protein>
    <recommendedName>
        <fullName evidence="1">Outer membrane protein assembly factor BamA</fullName>
    </recommendedName>
</protein>
<keyword id="KW-0998">Cell outer membrane</keyword>
<keyword id="KW-0472">Membrane</keyword>
<keyword id="KW-0677">Repeat</keyword>
<keyword id="KW-0732">Signal</keyword>
<keyword id="KW-0812">Transmembrane</keyword>
<keyword id="KW-1134">Transmembrane beta strand</keyword>
<sequence>MAMKKLLLASLLFGSATVYGADGFVVKNIHFEGLQRVAVGAALLNMPVRVGDTVSDEDLSNTIRALYATGNFEDVRVLRDGNNLIVQVKERPTIASITFSGNKSVKDEMLKQNLEASGVRVGEALDRTTLSSIEKGLEDFYYSVGKYNATVKAVVTPLPRNRVDLKLVFTEGKSAQIQQINIVGNHAFSSAELLGHFQLRDDVPWWNLMADRKYQKQKLAGDLEALRSYYLDRGYARFTINSTQVSLTPDKKGIYITINITEGDQYKLEGVDVTGNMAGYSAEITRLTKVEPGELYNGAKVTKMEDEIKQLLGRYGYAYPRVQTQPEINDKDKTVILHMNIDAGNRYYVRQIRFVGNDTSKDAVLRREMRQMEGSWLGSDQVEQGKERLNRTGYFENVDVETQRVPGTPDQVDVVYKVKERNTGSFNFGIGYGTESGISFQVGVQQDNWLGTGNVVAINGTKNDYQTYAELSLTDPYFTVNGVSLGGRLFYNDFKANNADLSDYTNSSYGFDGTLGFPINENNSLRTGLGYVHNDLSDMQPQVAMWRYLRSVGQNPSDSERASYKADDYTWTAGWAYNNLDRGFFPTAGSKASLNGKITLPGSDNEYYKLTFDSQSYFPINQDRTWVVLGRTRLGYGNGFGGKEMPFYENFYAGGSGSVRGFQSNNIGPKAVYLNSDGSVDQNKTGGNDAVGGNAMAVASLELITPTPFVSEQYANSLRTSVFMDAGTVWDTNWDQTTYPTLPDYSKATNVRLSAGIALQWMSPLGPLVFSYAQPVKKYEGDKSEQFQFNIGKTW</sequence>
<feature type="signal peptide" evidence="1">
    <location>
        <begin position="1"/>
        <end position="20"/>
    </location>
</feature>
<feature type="chain" id="PRO_1000215275" description="Outer membrane protein assembly factor BamA">
    <location>
        <begin position="21"/>
        <end position="795"/>
    </location>
</feature>
<feature type="domain" description="POTRA 1" evidence="2">
    <location>
        <begin position="24"/>
        <end position="91"/>
    </location>
</feature>
<feature type="domain" description="POTRA 2" evidence="2">
    <location>
        <begin position="92"/>
        <end position="172"/>
    </location>
</feature>
<feature type="domain" description="POTRA 3" evidence="2">
    <location>
        <begin position="175"/>
        <end position="263"/>
    </location>
</feature>
<feature type="domain" description="POTRA 4" evidence="2">
    <location>
        <begin position="266"/>
        <end position="344"/>
    </location>
</feature>
<feature type="domain" description="POTRA 5" evidence="2">
    <location>
        <begin position="347"/>
        <end position="421"/>
    </location>
</feature>
<reference key="1">
    <citation type="submission" date="2009-03" db="EMBL/GenBank/DDBJ databases">
        <title>Complete genome sequence of Edwardsiella ictaluri 93-146.</title>
        <authorList>
            <person name="Williams M.L."/>
            <person name="Gillaspy A.F."/>
            <person name="Dyer D.W."/>
            <person name="Thune R.L."/>
            <person name="Waldbieser G.C."/>
            <person name="Schuster S.C."/>
            <person name="Gipson J."/>
            <person name="Zaitshik J."/>
            <person name="Landry C."/>
            <person name="Lawrence M.L."/>
        </authorList>
    </citation>
    <scope>NUCLEOTIDE SEQUENCE [LARGE SCALE GENOMIC DNA]</scope>
    <source>
        <strain>93-146</strain>
    </source>
</reference>
<name>BAMA_EDWI9</name>
<accession>C5B7R5</accession>
<proteinExistence type="inferred from homology"/>
<dbReference type="EMBL" id="CP001600">
    <property type="protein sequence ID" value="ACR68061.1"/>
    <property type="molecule type" value="Genomic_DNA"/>
</dbReference>
<dbReference type="RefSeq" id="WP_015870254.1">
    <property type="nucleotide sequence ID" value="NZ_CP169062.1"/>
</dbReference>
<dbReference type="SMR" id="C5B7R5"/>
<dbReference type="STRING" id="67780.B6E78_14815"/>
<dbReference type="GeneID" id="69537900"/>
<dbReference type="KEGG" id="eic:NT01EI_0846"/>
<dbReference type="PATRIC" id="fig|634503.3.peg.764"/>
<dbReference type="HOGENOM" id="CLU_007664_1_0_6"/>
<dbReference type="OrthoDB" id="9803054at2"/>
<dbReference type="Proteomes" id="UP000001485">
    <property type="component" value="Chromosome"/>
</dbReference>
<dbReference type="GO" id="GO:1990063">
    <property type="term" value="C:Bam protein complex"/>
    <property type="evidence" value="ECO:0007669"/>
    <property type="project" value="TreeGrafter"/>
</dbReference>
<dbReference type="GO" id="GO:0043165">
    <property type="term" value="P:Gram-negative-bacterium-type cell outer membrane assembly"/>
    <property type="evidence" value="ECO:0007669"/>
    <property type="project" value="UniProtKB-UniRule"/>
</dbReference>
<dbReference type="GO" id="GO:0051205">
    <property type="term" value="P:protein insertion into membrane"/>
    <property type="evidence" value="ECO:0007669"/>
    <property type="project" value="UniProtKB-UniRule"/>
</dbReference>
<dbReference type="FunFam" id="2.40.160.50:FF:000001">
    <property type="entry name" value="Outer membrane protein assembly factor BamA"/>
    <property type="match status" value="1"/>
</dbReference>
<dbReference type="FunFam" id="3.10.20.310:FF:000001">
    <property type="entry name" value="Outer membrane protein assembly factor BamA"/>
    <property type="match status" value="1"/>
</dbReference>
<dbReference type="FunFam" id="3.10.20.310:FF:000002">
    <property type="entry name" value="Outer membrane protein assembly factor BamA"/>
    <property type="match status" value="1"/>
</dbReference>
<dbReference type="FunFam" id="3.10.20.310:FF:000003">
    <property type="entry name" value="Outer membrane protein assembly factor BamA"/>
    <property type="match status" value="1"/>
</dbReference>
<dbReference type="FunFam" id="3.10.20.310:FF:000004">
    <property type="entry name" value="Outer membrane protein assembly factor BamA"/>
    <property type="match status" value="1"/>
</dbReference>
<dbReference type="FunFam" id="3.10.20.310:FF:000005">
    <property type="entry name" value="Outer membrane protein assembly factor BamA"/>
    <property type="match status" value="1"/>
</dbReference>
<dbReference type="Gene3D" id="3.10.20.310">
    <property type="entry name" value="membrane protein fhac"/>
    <property type="match status" value="5"/>
</dbReference>
<dbReference type="Gene3D" id="2.40.160.50">
    <property type="entry name" value="membrane protein fhac: a member of the omp85/tpsb transporter family"/>
    <property type="match status" value="1"/>
</dbReference>
<dbReference type="HAMAP" id="MF_01430">
    <property type="entry name" value="OM_assembly_BamA"/>
    <property type="match status" value="1"/>
</dbReference>
<dbReference type="InterPro" id="IPR000184">
    <property type="entry name" value="Bac_surfAg_D15"/>
</dbReference>
<dbReference type="InterPro" id="IPR010827">
    <property type="entry name" value="BamA/TamA_POTRA"/>
</dbReference>
<dbReference type="InterPro" id="IPR039910">
    <property type="entry name" value="D15-like"/>
</dbReference>
<dbReference type="InterPro" id="IPR023707">
    <property type="entry name" value="OM_assembly_BamA"/>
</dbReference>
<dbReference type="InterPro" id="IPR034746">
    <property type="entry name" value="POTRA"/>
</dbReference>
<dbReference type="NCBIfam" id="TIGR03303">
    <property type="entry name" value="OM_YaeT"/>
    <property type="match status" value="1"/>
</dbReference>
<dbReference type="NCBIfam" id="NF008287">
    <property type="entry name" value="PRK11067.1"/>
    <property type="match status" value="1"/>
</dbReference>
<dbReference type="PANTHER" id="PTHR12815:SF23">
    <property type="entry name" value="OUTER MEMBRANE PROTEIN ASSEMBLY FACTOR BAMA"/>
    <property type="match status" value="1"/>
</dbReference>
<dbReference type="PANTHER" id="PTHR12815">
    <property type="entry name" value="SORTING AND ASSEMBLY MACHINERY SAMM50 PROTEIN FAMILY MEMBER"/>
    <property type="match status" value="1"/>
</dbReference>
<dbReference type="Pfam" id="PF01103">
    <property type="entry name" value="Omp85"/>
    <property type="match status" value="1"/>
</dbReference>
<dbReference type="Pfam" id="PF07244">
    <property type="entry name" value="POTRA"/>
    <property type="match status" value="4"/>
</dbReference>
<dbReference type="PIRSF" id="PIRSF006076">
    <property type="entry name" value="OM_assembly_OMP85"/>
    <property type="match status" value="1"/>
</dbReference>
<dbReference type="PROSITE" id="PS51779">
    <property type="entry name" value="POTRA"/>
    <property type="match status" value="5"/>
</dbReference>
<organism>
    <name type="scientific">Edwardsiella ictaluri (strain 93-146)</name>
    <dbReference type="NCBI Taxonomy" id="634503"/>
    <lineage>
        <taxon>Bacteria</taxon>
        <taxon>Pseudomonadati</taxon>
        <taxon>Pseudomonadota</taxon>
        <taxon>Gammaproteobacteria</taxon>
        <taxon>Enterobacterales</taxon>
        <taxon>Hafniaceae</taxon>
        <taxon>Edwardsiella</taxon>
    </lineage>
</organism>
<evidence type="ECO:0000255" key="1">
    <source>
        <dbReference type="HAMAP-Rule" id="MF_01430"/>
    </source>
</evidence>
<evidence type="ECO:0000255" key="2">
    <source>
        <dbReference type="PROSITE-ProRule" id="PRU01115"/>
    </source>
</evidence>
<gene>
    <name evidence="1" type="primary">bamA</name>
    <name type="synonym">yaeT</name>
    <name type="ordered locus">NT01EI_0846</name>
</gene>
<comment type="function">
    <text evidence="1">Part of the outer membrane protein assembly complex, which is involved in assembly and insertion of beta-barrel proteins into the outer membrane. Constitutes, with BamD, the core component of the assembly machinery.</text>
</comment>
<comment type="subunit">
    <text evidence="1">Part of the Bam complex, which is composed of the outer membrane protein BamA, and four lipoproteins BamB, BamC, BamD and BamE.</text>
</comment>
<comment type="subcellular location">
    <subcellularLocation>
        <location evidence="1">Cell outer membrane</location>
    </subcellularLocation>
</comment>
<comment type="similarity">
    <text evidence="1">Belongs to the BamA family.</text>
</comment>